<dbReference type="EC" id="5.4.99.-" evidence="6"/>
<dbReference type="EMBL" id="JNOM01000015">
    <property type="status" value="NOT_ANNOTATED_CDS"/>
    <property type="molecule type" value="Genomic_DNA"/>
</dbReference>
<dbReference type="Proteomes" id="UP000037505">
    <property type="component" value="Unassembled WGS sequence"/>
</dbReference>
<dbReference type="GO" id="GO:0016020">
    <property type="term" value="C:membrane"/>
    <property type="evidence" value="ECO:0007669"/>
    <property type="project" value="UniProtKB-SubCell"/>
</dbReference>
<dbReference type="GO" id="GO:0016853">
    <property type="term" value="F:isomerase activity"/>
    <property type="evidence" value="ECO:0007669"/>
    <property type="project" value="UniProtKB-KW"/>
</dbReference>
<accession>P9WEG7</accession>
<keyword id="KW-0325">Glycoprotein</keyword>
<keyword id="KW-0413">Isomerase</keyword>
<keyword id="KW-0472">Membrane</keyword>
<keyword id="KW-1185">Reference proteome</keyword>
<keyword id="KW-0812">Transmembrane</keyword>
<keyword id="KW-1133">Transmembrane helix</keyword>
<comment type="function">
    <text evidence="3">Cyclase; part of the gene cluster that mediates the biosynthesis of the tetrahydropyranyl antifungal agent restricticin that acts as an inhibitor of CYP51 and blocks the ergosterol biosynthesis (PubMed:33857369). The highly reducing polyketide synthase rstn3, the short chain dehydrogenase rstn4, the cyclase rstn5, the FAD-dependent monooxygenase rstn6 and the enoylreductase rstn7 are required to generate the first stable intermediate desmethylrestrictinol. Rstn3 with rstn7 biosynthesize the first polyketide chain intermediate that is reduced by rstn4, followed by epoxidation by rstn6 before 6-endo cyclization via epoxide opening by rstn5 leads to desmethylrestrictinol. The methyltransferase rstn1 then catalyzes the C4 O-methylation of desmethylrestrictinol to produce restrictinol, and the nonribosomal peptide synthetase rstn8 catalyzes the C3 esterification of restrictinol with glycine that leads to restricticin (PubMed:33857369).</text>
</comment>
<comment type="pathway">
    <text evidence="3">Antifungal biosynthesis.</text>
</comment>
<comment type="subcellular location">
    <subcellularLocation>
        <location evidence="1">Membrane</location>
        <topology evidence="1">Multi-pass membrane protein</topology>
    </subcellularLocation>
</comment>
<comment type="similarity">
    <text evidence="5">Belongs to the membrane-bound ascI terpene cyclase family.</text>
</comment>
<feature type="chain" id="PRO_0000461548" description="Terpene cyclase rstn5">
    <location>
        <begin position="1"/>
        <end position="349"/>
    </location>
</feature>
<feature type="transmembrane region" description="Helical" evidence="1">
    <location>
        <begin position="4"/>
        <end position="24"/>
    </location>
</feature>
<feature type="transmembrane region" description="Helical" evidence="1">
    <location>
        <begin position="81"/>
        <end position="101"/>
    </location>
</feature>
<feature type="transmembrane region" description="Helical" evidence="1">
    <location>
        <begin position="116"/>
        <end position="136"/>
    </location>
</feature>
<feature type="transmembrane region" description="Helical" evidence="1">
    <location>
        <begin position="158"/>
        <end position="178"/>
    </location>
</feature>
<feature type="transmembrane region" description="Helical" evidence="1">
    <location>
        <begin position="181"/>
        <end position="201"/>
    </location>
</feature>
<feature type="transmembrane region" description="Helical" evidence="1">
    <location>
        <begin position="228"/>
        <end position="248"/>
    </location>
</feature>
<feature type="transmembrane region" description="Helical" evidence="1">
    <location>
        <begin position="271"/>
        <end position="291"/>
    </location>
</feature>
<feature type="transmembrane region" description="Helical" evidence="1">
    <location>
        <begin position="309"/>
        <end position="329"/>
    </location>
</feature>
<feature type="glycosylation site" description="N-linked (GlcNAc...) asparagine" evidence="2">
    <location>
        <position position="222"/>
    </location>
</feature>
<evidence type="ECO:0000255" key="1"/>
<evidence type="ECO:0000255" key="2">
    <source>
        <dbReference type="PROSITE-ProRule" id="PRU00498"/>
    </source>
</evidence>
<evidence type="ECO:0000269" key="3">
    <source>
    </source>
</evidence>
<evidence type="ECO:0000303" key="4">
    <source>
    </source>
</evidence>
<evidence type="ECO:0000305" key="5"/>
<evidence type="ECO:0000305" key="6">
    <source>
    </source>
</evidence>
<protein>
    <recommendedName>
        <fullName evidence="4">Terpene cyclase rstn5</fullName>
        <ecNumber evidence="6">5.4.99.-</ecNumber>
    </recommendedName>
    <alternativeName>
        <fullName evidence="4">Restricticin biosynthesis cluster protein 5</fullName>
    </alternativeName>
</protein>
<name>RSTN5_ASPN3</name>
<reference key="1">
    <citation type="journal article" date="2015" name="BMC Genomics">
        <title>Genomic sequence of the aflatoxigenic filamentous fungus Aspergillus nomius.</title>
        <authorList>
            <person name="Moore G.G."/>
            <person name="Mack B.M."/>
            <person name="Beltz S.B."/>
        </authorList>
    </citation>
    <scope>NUCLEOTIDE SEQUENCE [LARGE SCALE GENOMIC DNA]</scope>
    <source>
        <strain>ATCC 15546 / NRRL 13137 / CBS 260.88 / M93</strain>
    </source>
</reference>
<reference key="2">
    <citation type="journal article" date="2021" name="J. Am. Chem. Soc.">
        <title>Targeted genome mining reveals the biosynthetic gene clusters of natural product CYP51 inhibitors.</title>
        <authorList>
            <person name="Liu N."/>
            <person name="Abramyan E.D."/>
            <person name="Cheng W."/>
            <person name="Perlatti B."/>
            <person name="Harvey C.J.B."/>
            <person name="Bills G.F."/>
            <person name="Tang Y."/>
        </authorList>
    </citation>
    <scope>FUNCTION</scope>
    <scope>PATHWAY</scope>
</reference>
<organism>
    <name type="scientific">Aspergillus nomiae NRRL (strain ATCC 15546 / NRRL 13137 / CBS 260.88 / M93)</name>
    <dbReference type="NCBI Taxonomy" id="1509407"/>
    <lineage>
        <taxon>Eukaryota</taxon>
        <taxon>Fungi</taxon>
        <taxon>Dikarya</taxon>
        <taxon>Ascomycota</taxon>
        <taxon>Pezizomycotina</taxon>
        <taxon>Eurotiomycetes</taxon>
        <taxon>Eurotiomycetidae</taxon>
        <taxon>Eurotiales</taxon>
        <taxon>Aspergillaceae</taxon>
        <taxon>Aspergillus</taxon>
        <taxon>Aspergillus subgen. Circumdati</taxon>
    </lineage>
</organism>
<gene>
    <name evidence="4" type="primary">rstn5</name>
</gene>
<proteinExistence type="inferred from homology"/>
<sequence length="349" mass="38066">MLHLTPLIFLSLAMAAAVGVWGVFTWNGGFDEMDGIVASHQSTGILGLQHCPDLDRGLMSMVAFNLPVVGRNPIFPAGRRFMVQFLANVAVIPVILNTEGARAEPGSLVRYSTTWGLFSQMATSAVMCPLYGFWFVRQSGAKQTEGGTLRPLPPNKWVVPSSVLIGYGIPALLSFDPFQWGLDLQIRGILAFTLYPLCISLTARLMRKVSKKRGRSLSPEWNSTISYVAVGVVGMVSHLWYLGTGLTGYPLSGDAVSSVAGPTEVGRAAQLVLLFLQIDYVITFAAMLLLAWHELTRHQLVRSWRAAGTLAVGWLFLGPGATLAAAWALREQWLSRPRGVRGEIKQKPK</sequence>